<protein>
    <recommendedName>
        <fullName evidence="4">Potassium channel toxin alpha-KTx 2.24</fullName>
    </recommendedName>
    <alternativeName>
        <fullName evidence="4">CboK7</fullName>
    </alternativeName>
</protein>
<accession>C0HM78</accession>
<feature type="chain" id="PRO_0000459538" description="Potassium channel toxin alpha-KTx 2.24">
    <location>
        <begin position="1"/>
        <end position="39" status="greater than"/>
    </location>
</feature>
<feature type="site" description="Basic residue of the functional dyad" evidence="1">
    <location>
        <position position="28"/>
    </location>
</feature>
<feature type="site" description="Aromatic residue of the functional dyad" evidence="1">
    <location>
        <position position="37"/>
    </location>
</feature>
<feature type="disulfide bond" evidence="1">
    <location>
        <begin position="7"/>
        <end position="29"/>
    </location>
</feature>
<feature type="disulfide bond" evidence="1">
    <location>
        <begin position="13"/>
        <end position="34"/>
    </location>
</feature>
<feature type="disulfide bond" evidence="1">
    <location>
        <begin position="17"/>
        <end position="36"/>
    </location>
</feature>
<feature type="non-terminal residue" evidence="4">
    <location>
        <position position="39"/>
    </location>
</feature>
<dbReference type="SMR" id="C0HM78"/>
<dbReference type="GO" id="GO:0005576">
    <property type="term" value="C:extracellular region"/>
    <property type="evidence" value="ECO:0007669"/>
    <property type="project" value="UniProtKB-SubCell"/>
</dbReference>
<dbReference type="GO" id="GO:0008200">
    <property type="term" value="F:ion channel inhibitor activity"/>
    <property type="evidence" value="ECO:0007669"/>
    <property type="project" value="InterPro"/>
</dbReference>
<dbReference type="GO" id="GO:0015459">
    <property type="term" value="F:potassium channel regulator activity"/>
    <property type="evidence" value="ECO:0007669"/>
    <property type="project" value="UniProtKB-KW"/>
</dbReference>
<dbReference type="GO" id="GO:0090729">
    <property type="term" value="F:toxin activity"/>
    <property type="evidence" value="ECO:0007669"/>
    <property type="project" value="UniProtKB-KW"/>
</dbReference>
<dbReference type="FunFam" id="3.30.30.10:FF:000009">
    <property type="entry name" value="Potassium channel toxin alpha-KTx 4.3"/>
    <property type="match status" value="1"/>
</dbReference>
<dbReference type="Gene3D" id="3.30.30.10">
    <property type="entry name" value="Knottin, scorpion toxin-like"/>
    <property type="match status" value="1"/>
</dbReference>
<dbReference type="InterPro" id="IPR036574">
    <property type="entry name" value="Scorpion_toxin-like_sf"/>
</dbReference>
<dbReference type="InterPro" id="IPR001947">
    <property type="entry name" value="Scorpion_toxinS_K_inh"/>
</dbReference>
<dbReference type="Pfam" id="PF00451">
    <property type="entry name" value="Toxin_2"/>
    <property type="match status" value="1"/>
</dbReference>
<dbReference type="PRINTS" id="PR00286">
    <property type="entry name" value="CHARYBDTOXIN"/>
</dbReference>
<dbReference type="SUPFAM" id="SSF57095">
    <property type="entry name" value="Scorpion toxin-like"/>
    <property type="match status" value="1"/>
</dbReference>
<sequence>TFINVKCTSPKQCLKPCKDLYGPHAGEKCMNGKCKCYKV</sequence>
<keyword id="KW-0903">Direct protein sequencing</keyword>
<keyword id="KW-1015">Disulfide bond</keyword>
<keyword id="KW-0872">Ion channel impairing toxin</keyword>
<keyword id="KW-0528">Neurotoxin</keyword>
<keyword id="KW-0582">Pharmaceutical</keyword>
<keyword id="KW-0632">Potassium channel impairing toxin</keyword>
<keyword id="KW-0964">Secreted</keyword>
<keyword id="KW-0800">Toxin</keyword>
<keyword id="KW-1220">Voltage-gated potassium channel impairing toxin</keyword>
<proteinExistence type="evidence at protein level"/>
<comment type="function">
    <text evidence="3">Blocks human voltage-gated potassium (Kv) channels Kv1.1/KCNA, Kv1.2/KCNA2 and Kv1.3/KCNA3 (PubMed:37624263). Exhibits high affinity for Kv1.2/KCNA2 and selectivity over Kv1.1/KCNA and Kv1.3/KCNA3 (PubMed:37624263).</text>
</comment>
<comment type="subcellular location">
    <subcellularLocation>
        <location evidence="3">Secreted</location>
    </subcellularLocation>
</comment>
<comment type="tissue specificity">
    <text evidence="6">Expressed by the venom gland.</text>
</comment>
<comment type="domain">
    <text evidence="2">Has the structural arrangement of an alpha-helix connected to a beta-sheet by disulfide bonds (CSalpha/beta).</text>
</comment>
<comment type="mass spectrometry"/>
<comment type="pharmaceutical">
    <text evidence="4">Voltage-gated potassium (Kv) channels are involved in a wide range of diseases, such as cancer, autoimmune diseases, cardiovascular disorders, and neuroinflammatory diseases. Pharmacological modulation of Kv channels via the use of potassium channel toxins, isolated from venomous animals, has significant therapeutic potential and may play an important role in identifying and developing therapeutic opportunities related to these ion channels.</text>
</comment>
<comment type="similarity">
    <text evidence="5">Belongs to the short scorpion toxin superfamily. Potassium channel inhibitor family. Alpha-KTx 02 subfamily.</text>
</comment>
<reference evidence="5" key="1">
    <citation type="journal article" date="2023" name="Toxins">
        <title>Of Seven New K+ Channel Inhibitor Peptides of Centruroides bonito, alpha-KTx 2.24 Has a Picomolar Affinity for Kv1.2.</title>
        <authorList>
            <person name="Shakeel K."/>
            <person name="Olamendi-Portugal T."/>
            <person name="Naseem M.U."/>
            <person name="Becerril B."/>
            <person name="Zamudio F.Z."/>
            <person name="Delgado-Prudencio G."/>
            <person name="Possani L.D."/>
            <person name="Panyi G."/>
        </authorList>
    </citation>
    <scope>PROTEIN SEQUENCE</scope>
    <scope>FUNCTION</scope>
    <scope>SUBCELLULAR LOCATION</scope>
    <scope>TISSUE SPECIFICITY</scope>
    <scope>MASS SPECTROMETRY</scope>
    <scope>PHARMACEUTICAL</scope>
</reference>
<organism>
    <name type="scientific">Centruroides bonito</name>
    <name type="common">Scorpion</name>
    <dbReference type="NCBI Taxonomy" id="3035065"/>
    <lineage>
        <taxon>Eukaryota</taxon>
        <taxon>Metazoa</taxon>
        <taxon>Ecdysozoa</taxon>
        <taxon>Arthropoda</taxon>
        <taxon>Chelicerata</taxon>
        <taxon>Arachnida</taxon>
        <taxon>Scorpiones</taxon>
        <taxon>Buthida</taxon>
        <taxon>Buthoidea</taxon>
        <taxon>Buthidae</taxon>
        <taxon>Centruroides</taxon>
    </lineage>
</organism>
<name>KAX2O_CENBO</name>
<evidence type="ECO:0000250" key="1">
    <source>
        <dbReference type="UniProtKB" id="O46028"/>
    </source>
</evidence>
<evidence type="ECO:0000250" key="2">
    <source>
        <dbReference type="UniProtKB" id="P08815"/>
    </source>
</evidence>
<evidence type="ECO:0000269" key="3">
    <source>
    </source>
</evidence>
<evidence type="ECO:0000303" key="4">
    <source>
    </source>
</evidence>
<evidence type="ECO:0000305" key="5"/>
<evidence type="ECO:0000305" key="6">
    <source>
    </source>
</evidence>